<gene>
    <name type="ordered locus">Mpal_1084</name>
</gene>
<dbReference type="EMBL" id="CP001338">
    <property type="protein sequence ID" value="ACL16430.1"/>
    <property type="molecule type" value="Genomic_DNA"/>
</dbReference>
<dbReference type="RefSeq" id="WP_012617749.1">
    <property type="nucleotide sequence ID" value="NC_011832.1"/>
</dbReference>
<dbReference type="STRING" id="521011.Mpal_1084"/>
<dbReference type="GeneID" id="7271000"/>
<dbReference type="KEGG" id="mpl:Mpal_1084"/>
<dbReference type="eggNOG" id="arCOG02119">
    <property type="taxonomic scope" value="Archaea"/>
</dbReference>
<dbReference type="HOGENOM" id="CLU_138334_0_0_2"/>
<dbReference type="OrthoDB" id="63517at2157"/>
<dbReference type="Proteomes" id="UP000002457">
    <property type="component" value="Chromosome"/>
</dbReference>
<dbReference type="HAMAP" id="MF_01223">
    <property type="entry name" value="UPF0212"/>
    <property type="match status" value="1"/>
</dbReference>
<dbReference type="InterPro" id="IPR007564">
    <property type="entry name" value="UPF0212"/>
</dbReference>
<dbReference type="NCBIfam" id="NF003035">
    <property type="entry name" value="PRK03922.1"/>
    <property type="match status" value="1"/>
</dbReference>
<dbReference type="PANTHER" id="PTHR42199">
    <property type="entry name" value="UPF0212 PROTEIN MJ0068"/>
    <property type="match status" value="1"/>
</dbReference>
<dbReference type="PANTHER" id="PTHR42199:SF1">
    <property type="entry name" value="UPF0212 PROTEIN TK1194"/>
    <property type="match status" value="1"/>
</dbReference>
<dbReference type="Pfam" id="PF04475">
    <property type="entry name" value="DUF555"/>
    <property type="match status" value="1"/>
</dbReference>
<dbReference type="PIRSF" id="PIRSF016934">
    <property type="entry name" value="UCP016934"/>
    <property type="match status" value="1"/>
</dbReference>
<accession>B8GH25</accession>
<evidence type="ECO:0000255" key="1">
    <source>
        <dbReference type="HAMAP-Rule" id="MF_01223"/>
    </source>
</evidence>
<comment type="similarity">
    <text evidence="1">Belongs to the UPF0212 family.</text>
</comment>
<feature type="chain" id="PRO_1000164875" description="UPF0212 protein Mpal_1084">
    <location>
        <begin position="1"/>
        <end position="112"/>
    </location>
</feature>
<proteinExistence type="inferred from homology"/>
<organism>
    <name type="scientific">Methanosphaerula palustris (strain ATCC BAA-1556 / DSM 19958 / E1-9c)</name>
    <dbReference type="NCBI Taxonomy" id="521011"/>
    <lineage>
        <taxon>Archaea</taxon>
        <taxon>Methanobacteriati</taxon>
        <taxon>Methanobacteriota</taxon>
        <taxon>Stenosarchaea group</taxon>
        <taxon>Methanomicrobia</taxon>
        <taxon>Methanomicrobiales</taxon>
        <taxon>Methanoregulaceae</taxon>
        <taxon>Methanosphaerula</taxon>
    </lineage>
</organism>
<sequence length="112" mass="12187">MPDYMVTLESAWIIKDVKTMDDAISIAIGEAGKRLNPAAKYVEIETGMMVCPLCNKALNCAVVVANTALVGLTLQMKVFRAESEEHAVRIAKSVIGKALRDVPLNVQDVQEL</sequence>
<protein>
    <recommendedName>
        <fullName evidence="1">UPF0212 protein Mpal_1084</fullName>
    </recommendedName>
</protein>
<name>Y1084_METPE</name>
<reference key="1">
    <citation type="journal article" date="2015" name="Genome Announc.">
        <title>Complete Genome Sequence of Methanosphaerula palustris E1-9CT, a Hydrogenotrophic Methanogen Isolated from a Minerotrophic Fen Peatland.</title>
        <authorList>
            <person name="Cadillo-Quiroz H."/>
            <person name="Browne P."/>
            <person name="Kyrpides N."/>
            <person name="Woyke T."/>
            <person name="Goodwin L."/>
            <person name="Detter C."/>
            <person name="Yavitt J.B."/>
            <person name="Zinder S.H."/>
        </authorList>
    </citation>
    <scope>NUCLEOTIDE SEQUENCE [LARGE SCALE GENOMIC DNA]</scope>
    <source>
        <strain>ATCC BAA-1556 / DSM 19958 / E1-9c</strain>
    </source>
</reference>
<keyword id="KW-1185">Reference proteome</keyword>